<sequence>MSRRHRAEKREIFPDPKFGDRDLTKFMNYIMLDGKKSVAERIVYGALEIVEEKLKREPIRVFHDALDNVAPEVEVRSRRVGGATYQVPVEVRAERKKALAIRWLTGAARGRNENTMRERLAAEMMDASANRGTAVKKREDTHRMAEANRAFSHYRW</sequence>
<dbReference type="EMBL" id="CP000449">
    <property type="protein sequence ID" value="ABI66091.1"/>
    <property type="molecule type" value="Genomic_DNA"/>
</dbReference>
<dbReference type="RefSeq" id="WP_011643737.1">
    <property type="nucleotide sequence ID" value="NC_008347.1"/>
</dbReference>
<dbReference type="SMR" id="Q0ANP6"/>
<dbReference type="STRING" id="394221.Mmar10_1799"/>
<dbReference type="KEGG" id="mmr:Mmar10_1799"/>
<dbReference type="eggNOG" id="COG0049">
    <property type="taxonomic scope" value="Bacteria"/>
</dbReference>
<dbReference type="HOGENOM" id="CLU_072226_1_1_5"/>
<dbReference type="OrthoDB" id="9807653at2"/>
<dbReference type="Proteomes" id="UP000001964">
    <property type="component" value="Chromosome"/>
</dbReference>
<dbReference type="GO" id="GO:0015935">
    <property type="term" value="C:small ribosomal subunit"/>
    <property type="evidence" value="ECO:0007669"/>
    <property type="project" value="InterPro"/>
</dbReference>
<dbReference type="GO" id="GO:0019843">
    <property type="term" value="F:rRNA binding"/>
    <property type="evidence" value="ECO:0007669"/>
    <property type="project" value="UniProtKB-UniRule"/>
</dbReference>
<dbReference type="GO" id="GO:0003735">
    <property type="term" value="F:structural constituent of ribosome"/>
    <property type="evidence" value="ECO:0007669"/>
    <property type="project" value="InterPro"/>
</dbReference>
<dbReference type="GO" id="GO:0000049">
    <property type="term" value="F:tRNA binding"/>
    <property type="evidence" value="ECO:0007669"/>
    <property type="project" value="UniProtKB-UniRule"/>
</dbReference>
<dbReference type="GO" id="GO:0006412">
    <property type="term" value="P:translation"/>
    <property type="evidence" value="ECO:0007669"/>
    <property type="project" value="UniProtKB-UniRule"/>
</dbReference>
<dbReference type="CDD" id="cd14869">
    <property type="entry name" value="uS7_Bacteria"/>
    <property type="match status" value="1"/>
</dbReference>
<dbReference type="FunFam" id="1.10.455.10:FF:000001">
    <property type="entry name" value="30S ribosomal protein S7"/>
    <property type="match status" value="1"/>
</dbReference>
<dbReference type="Gene3D" id="1.10.455.10">
    <property type="entry name" value="Ribosomal protein S7 domain"/>
    <property type="match status" value="1"/>
</dbReference>
<dbReference type="HAMAP" id="MF_00480_B">
    <property type="entry name" value="Ribosomal_uS7_B"/>
    <property type="match status" value="1"/>
</dbReference>
<dbReference type="InterPro" id="IPR000235">
    <property type="entry name" value="Ribosomal_uS7"/>
</dbReference>
<dbReference type="InterPro" id="IPR005717">
    <property type="entry name" value="Ribosomal_uS7_bac/org-type"/>
</dbReference>
<dbReference type="InterPro" id="IPR020606">
    <property type="entry name" value="Ribosomal_uS7_CS"/>
</dbReference>
<dbReference type="InterPro" id="IPR023798">
    <property type="entry name" value="Ribosomal_uS7_dom"/>
</dbReference>
<dbReference type="InterPro" id="IPR036823">
    <property type="entry name" value="Ribosomal_uS7_dom_sf"/>
</dbReference>
<dbReference type="NCBIfam" id="TIGR01029">
    <property type="entry name" value="rpsG_bact"/>
    <property type="match status" value="1"/>
</dbReference>
<dbReference type="PANTHER" id="PTHR11205">
    <property type="entry name" value="RIBOSOMAL PROTEIN S7"/>
    <property type="match status" value="1"/>
</dbReference>
<dbReference type="Pfam" id="PF00177">
    <property type="entry name" value="Ribosomal_S7"/>
    <property type="match status" value="1"/>
</dbReference>
<dbReference type="PIRSF" id="PIRSF002122">
    <property type="entry name" value="RPS7p_RPS7a_RPS5e_RPS7o"/>
    <property type="match status" value="1"/>
</dbReference>
<dbReference type="SUPFAM" id="SSF47973">
    <property type="entry name" value="Ribosomal protein S7"/>
    <property type="match status" value="1"/>
</dbReference>
<dbReference type="PROSITE" id="PS00052">
    <property type="entry name" value="RIBOSOMAL_S7"/>
    <property type="match status" value="1"/>
</dbReference>
<organism>
    <name type="scientific">Maricaulis maris (strain MCS10)</name>
    <name type="common">Caulobacter maris</name>
    <dbReference type="NCBI Taxonomy" id="394221"/>
    <lineage>
        <taxon>Bacteria</taxon>
        <taxon>Pseudomonadati</taxon>
        <taxon>Pseudomonadota</taxon>
        <taxon>Alphaproteobacteria</taxon>
        <taxon>Maricaulales</taxon>
        <taxon>Maricaulaceae</taxon>
        <taxon>Maricaulis</taxon>
    </lineage>
</organism>
<name>RS7_MARMM</name>
<proteinExistence type="inferred from homology"/>
<accession>Q0ANP6</accession>
<keyword id="KW-1185">Reference proteome</keyword>
<keyword id="KW-0687">Ribonucleoprotein</keyword>
<keyword id="KW-0689">Ribosomal protein</keyword>
<keyword id="KW-0694">RNA-binding</keyword>
<keyword id="KW-0699">rRNA-binding</keyword>
<keyword id="KW-0820">tRNA-binding</keyword>
<reference key="1">
    <citation type="submission" date="2006-08" db="EMBL/GenBank/DDBJ databases">
        <title>Complete sequence of Maricaulis maris MCS10.</title>
        <authorList>
            <consortium name="US DOE Joint Genome Institute"/>
            <person name="Copeland A."/>
            <person name="Lucas S."/>
            <person name="Lapidus A."/>
            <person name="Barry K."/>
            <person name="Detter J.C."/>
            <person name="Glavina del Rio T."/>
            <person name="Hammon N."/>
            <person name="Israni S."/>
            <person name="Dalin E."/>
            <person name="Tice H."/>
            <person name="Pitluck S."/>
            <person name="Saunders E."/>
            <person name="Brettin T."/>
            <person name="Bruce D."/>
            <person name="Han C."/>
            <person name="Tapia R."/>
            <person name="Gilna P."/>
            <person name="Schmutz J."/>
            <person name="Larimer F."/>
            <person name="Land M."/>
            <person name="Hauser L."/>
            <person name="Kyrpides N."/>
            <person name="Mikhailova N."/>
            <person name="Viollier P."/>
            <person name="Stephens C."/>
            <person name="Richardson P."/>
        </authorList>
    </citation>
    <scope>NUCLEOTIDE SEQUENCE [LARGE SCALE GENOMIC DNA]</scope>
    <source>
        <strain>MCS10</strain>
    </source>
</reference>
<feature type="chain" id="PRO_1000014224" description="Small ribosomal subunit protein uS7">
    <location>
        <begin position="1"/>
        <end position="156"/>
    </location>
</feature>
<protein>
    <recommendedName>
        <fullName evidence="1">Small ribosomal subunit protein uS7</fullName>
    </recommendedName>
    <alternativeName>
        <fullName evidence="2">30S ribosomal protein S7</fullName>
    </alternativeName>
</protein>
<gene>
    <name evidence="1" type="primary">rpsG</name>
    <name type="ordered locus">Mmar10_1799</name>
</gene>
<comment type="function">
    <text evidence="1">One of the primary rRNA binding proteins, it binds directly to 16S rRNA where it nucleates assembly of the head domain of the 30S subunit. Is located at the subunit interface close to the decoding center, probably blocks exit of the E-site tRNA.</text>
</comment>
<comment type="subunit">
    <text evidence="1">Part of the 30S ribosomal subunit. Contacts proteins S9 and S11.</text>
</comment>
<comment type="similarity">
    <text evidence="1">Belongs to the universal ribosomal protein uS7 family.</text>
</comment>
<evidence type="ECO:0000255" key="1">
    <source>
        <dbReference type="HAMAP-Rule" id="MF_00480"/>
    </source>
</evidence>
<evidence type="ECO:0000305" key="2"/>